<name>RS9_MACCJ</name>
<comment type="similarity">
    <text evidence="1">Belongs to the universal ribosomal protein uS9 family.</text>
</comment>
<evidence type="ECO:0000255" key="1">
    <source>
        <dbReference type="HAMAP-Rule" id="MF_00532"/>
    </source>
</evidence>
<evidence type="ECO:0000256" key="2">
    <source>
        <dbReference type="SAM" id="MobiDB-lite"/>
    </source>
</evidence>
<evidence type="ECO:0000305" key="3"/>
<proteinExistence type="inferred from homology"/>
<reference key="1">
    <citation type="journal article" date="2009" name="J. Bacteriol.">
        <title>Complete genome sequence of Macrococcus caseolyticus strain JCSCS5402, reflecting the ancestral genome of the human-pathogenic staphylococci.</title>
        <authorList>
            <person name="Baba T."/>
            <person name="Kuwahara-Arai K."/>
            <person name="Uchiyama I."/>
            <person name="Takeuchi F."/>
            <person name="Ito T."/>
            <person name="Hiramatsu K."/>
        </authorList>
    </citation>
    <scope>NUCLEOTIDE SEQUENCE [LARGE SCALE GENOMIC DNA]</scope>
    <source>
        <strain>JCSC5402</strain>
    </source>
</reference>
<organism>
    <name type="scientific">Macrococcus caseolyticus (strain JCSC5402)</name>
    <name type="common">Macrococcoides caseolyticum</name>
    <dbReference type="NCBI Taxonomy" id="458233"/>
    <lineage>
        <taxon>Bacteria</taxon>
        <taxon>Bacillati</taxon>
        <taxon>Bacillota</taxon>
        <taxon>Bacilli</taxon>
        <taxon>Bacillales</taxon>
        <taxon>Staphylococcaceae</taxon>
        <taxon>Macrococcoides</taxon>
    </lineage>
</organism>
<sequence>MAQVEYKGTGRRKHSVARVRLIPGEGNITINGRDVRDYLPFESLILDLNQPFDITETKGNYDVLVNVNGGGLTGQAQAIRHGISRALLEADPEYRGSLKRAGMLTRDPRMKERKKPGLKGARRSPQFSKR</sequence>
<feature type="chain" id="PRO_1000146459" description="Small ribosomal subunit protein uS9">
    <location>
        <begin position="1"/>
        <end position="130"/>
    </location>
</feature>
<feature type="region of interest" description="Disordered" evidence="2">
    <location>
        <begin position="98"/>
        <end position="130"/>
    </location>
</feature>
<feature type="compositionally biased region" description="Basic residues" evidence="2">
    <location>
        <begin position="111"/>
        <end position="130"/>
    </location>
</feature>
<dbReference type="EMBL" id="AP009484">
    <property type="protein sequence ID" value="BAH16935.1"/>
    <property type="molecule type" value="Genomic_DNA"/>
</dbReference>
<dbReference type="RefSeq" id="WP_012656136.1">
    <property type="nucleotide sequence ID" value="NC_011999.1"/>
</dbReference>
<dbReference type="SMR" id="B9E9M4"/>
<dbReference type="STRING" id="458233.MCCL_0228"/>
<dbReference type="GeneID" id="35294504"/>
<dbReference type="GeneID" id="61130651"/>
<dbReference type="KEGG" id="mcl:MCCL_0228"/>
<dbReference type="eggNOG" id="COG0103">
    <property type="taxonomic scope" value="Bacteria"/>
</dbReference>
<dbReference type="HOGENOM" id="CLU_046483_2_1_9"/>
<dbReference type="OrthoDB" id="9803965at2"/>
<dbReference type="Proteomes" id="UP000001383">
    <property type="component" value="Chromosome"/>
</dbReference>
<dbReference type="GO" id="GO:0022627">
    <property type="term" value="C:cytosolic small ribosomal subunit"/>
    <property type="evidence" value="ECO:0007669"/>
    <property type="project" value="TreeGrafter"/>
</dbReference>
<dbReference type="GO" id="GO:0003723">
    <property type="term" value="F:RNA binding"/>
    <property type="evidence" value="ECO:0007669"/>
    <property type="project" value="TreeGrafter"/>
</dbReference>
<dbReference type="GO" id="GO:0003735">
    <property type="term" value="F:structural constituent of ribosome"/>
    <property type="evidence" value="ECO:0007669"/>
    <property type="project" value="InterPro"/>
</dbReference>
<dbReference type="GO" id="GO:0006412">
    <property type="term" value="P:translation"/>
    <property type="evidence" value="ECO:0007669"/>
    <property type="project" value="UniProtKB-UniRule"/>
</dbReference>
<dbReference type="FunFam" id="3.30.230.10:FF:000001">
    <property type="entry name" value="30S ribosomal protein S9"/>
    <property type="match status" value="1"/>
</dbReference>
<dbReference type="Gene3D" id="3.30.230.10">
    <property type="match status" value="1"/>
</dbReference>
<dbReference type="HAMAP" id="MF_00532_B">
    <property type="entry name" value="Ribosomal_uS9_B"/>
    <property type="match status" value="1"/>
</dbReference>
<dbReference type="InterPro" id="IPR020568">
    <property type="entry name" value="Ribosomal_Su5_D2-typ_SF"/>
</dbReference>
<dbReference type="InterPro" id="IPR000754">
    <property type="entry name" value="Ribosomal_uS9"/>
</dbReference>
<dbReference type="InterPro" id="IPR023035">
    <property type="entry name" value="Ribosomal_uS9_bac/plastid"/>
</dbReference>
<dbReference type="InterPro" id="IPR020574">
    <property type="entry name" value="Ribosomal_uS9_CS"/>
</dbReference>
<dbReference type="InterPro" id="IPR014721">
    <property type="entry name" value="Ribsml_uS5_D2-typ_fold_subgr"/>
</dbReference>
<dbReference type="NCBIfam" id="NF001099">
    <property type="entry name" value="PRK00132.1"/>
    <property type="match status" value="1"/>
</dbReference>
<dbReference type="PANTHER" id="PTHR21569">
    <property type="entry name" value="RIBOSOMAL PROTEIN S9"/>
    <property type="match status" value="1"/>
</dbReference>
<dbReference type="PANTHER" id="PTHR21569:SF1">
    <property type="entry name" value="SMALL RIBOSOMAL SUBUNIT PROTEIN US9M"/>
    <property type="match status" value="1"/>
</dbReference>
<dbReference type="Pfam" id="PF00380">
    <property type="entry name" value="Ribosomal_S9"/>
    <property type="match status" value="1"/>
</dbReference>
<dbReference type="SUPFAM" id="SSF54211">
    <property type="entry name" value="Ribosomal protein S5 domain 2-like"/>
    <property type="match status" value="1"/>
</dbReference>
<dbReference type="PROSITE" id="PS00360">
    <property type="entry name" value="RIBOSOMAL_S9"/>
    <property type="match status" value="1"/>
</dbReference>
<accession>B9E9M4</accession>
<gene>
    <name evidence="1" type="primary">rpsI</name>
    <name type="ordered locus">MCCL_0228</name>
</gene>
<protein>
    <recommendedName>
        <fullName evidence="1">Small ribosomal subunit protein uS9</fullName>
    </recommendedName>
    <alternativeName>
        <fullName evidence="3">30S ribosomal protein S9</fullName>
    </alternativeName>
</protein>
<keyword id="KW-1185">Reference proteome</keyword>
<keyword id="KW-0687">Ribonucleoprotein</keyword>
<keyword id="KW-0689">Ribosomal protein</keyword>